<name>YBBV_ECOLI</name>
<accession>P75711</accession>
<accession>Q2MBR8</accession>
<keyword id="KW-1185">Reference proteome</keyword>
<protein>
    <recommendedName>
        <fullName>Uncharacterized protein YbbV</fullName>
    </recommendedName>
</protein>
<proteinExistence type="predicted"/>
<reference key="1">
    <citation type="journal article" date="1997" name="Science">
        <title>The complete genome sequence of Escherichia coli K-12.</title>
        <authorList>
            <person name="Blattner F.R."/>
            <person name="Plunkett G. III"/>
            <person name="Bloch C.A."/>
            <person name="Perna N.T."/>
            <person name="Burland V."/>
            <person name="Riley M."/>
            <person name="Collado-Vides J."/>
            <person name="Glasner J.D."/>
            <person name="Rode C.K."/>
            <person name="Mayhew G.F."/>
            <person name="Gregor J."/>
            <person name="Davis N.W."/>
            <person name="Kirkpatrick H.A."/>
            <person name="Goeden M.A."/>
            <person name="Rose D.J."/>
            <person name="Mau B."/>
            <person name="Shao Y."/>
        </authorList>
    </citation>
    <scope>NUCLEOTIDE SEQUENCE [LARGE SCALE GENOMIC DNA]</scope>
    <source>
        <strain>K12 / MG1655 / ATCC 47076</strain>
    </source>
</reference>
<reference key="2">
    <citation type="journal article" date="2006" name="Mol. Syst. Biol.">
        <title>Highly accurate genome sequences of Escherichia coli K-12 strains MG1655 and W3110.</title>
        <authorList>
            <person name="Hayashi K."/>
            <person name="Morooka N."/>
            <person name="Yamamoto Y."/>
            <person name="Fujita K."/>
            <person name="Isono K."/>
            <person name="Choi S."/>
            <person name="Ohtsubo E."/>
            <person name="Baba T."/>
            <person name="Wanner B.L."/>
            <person name="Mori H."/>
            <person name="Horiuchi T."/>
        </authorList>
    </citation>
    <scope>NUCLEOTIDE SEQUENCE [LARGE SCALE GENOMIC DNA]</scope>
    <source>
        <strain>K12 / W3110 / ATCC 27325 / DSM 5911</strain>
    </source>
</reference>
<feature type="chain" id="PRO_0000168643" description="Uncharacterized protein YbbV">
    <location>
        <begin position="1"/>
        <end position="92"/>
    </location>
</feature>
<sequence length="92" mass="10844">MNRPAILKKKAAKDVASVLKIIFLFYLFLIARLKQRYSIREIKRDLWNIRENYSSNAAIAKIYCRKRKASGPGKHLTILPYGWVRFITFPIM</sequence>
<gene>
    <name type="primary">ybbV</name>
    <name type="ordered locus">b0510</name>
    <name type="ordered locus">JW0498</name>
</gene>
<dbReference type="EMBL" id="U00096">
    <property type="status" value="NOT_ANNOTATED_CDS"/>
    <property type="molecule type" value="Genomic_DNA"/>
</dbReference>
<dbReference type="EMBL" id="AP009048">
    <property type="protein sequence ID" value="BAE76288.1"/>
    <property type="molecule type" value="Genomic_DNA"/>
</dbReference>
<dbReference type="PIR" id="E64782">
    <property type="entry name" value="E64782"/>
</dbReference>
<dbReference type="BioGRID" id="4259864">
    <property type="interactions" value="5"/>
</dbReference>
<dbReference type="FunCoup" id="P75711">
    <property type="interactions" value="31"/>
</dbReference>
<dbReference type="IntAct" id="P75711">
    <property type="interactions" value="1"/>
</dbReference>
<dbReference type="KEGG" id="ecj:JW0498"/>
<dbReference type="HOGENOM" id="CLU_2408590_0_0_6"/>
<dbReference type="InParanoid" id="P75711"/>
<dbReference type="PRO" id="PR:P75711"/>
<dbReference type="Proteomes" id="UP000000625">
    <property type="component" value="Chromosome"/>
</dbReference>
<organism>
    <name type="scientific">Escherichia coli (strain K12)</name>
    <dbReference type="NCBI Taxonomy" id="83333"/>
    <lineage>
        <taxon>Bacteria</taxon>
        <taxon>Pseudomonadati</taxon>
        <taxon>Pseudomonadota</taxon>
        <taxon>Gammaproteobacteria</taxon>
        <taxon>Enterobacterales</taxon>
        <taxon>Enterobacteriaceae</taxon>
        <taxon>Escherichia</taxon>
    </lineage>
</organism>